<accession>Q6UQ17</accession>
<dbReference type="EC" id="7.6.2.1" evidence="7"/>
<dbReference type="EMBL" id="AY364445">
    <property type="protein sequence ID" value="AAR12913.1"/>
    <property type="molecule type" value="mRNA"/>
</dbReference>
<dbReference type="EMBL" id="AC152058">
    <property type="status" value="NOT_ANNOTATED_CDS"/>
    <property type="molecule type" value="Genomic_DNA"/>
</dbReference>
<dbReference type="EMBL" id="BC118977">
    <property type="protein sequence ID" value="AAI18978.1"/>
    <property type="molecule type" value="mRNA"/>
</dbReference>
<dbReference type="CCDS" id="CCDS24024.1"/>
<dbReference type="RefSeq" id="NP_080370.2">
    <property type="nucleotide sequence ID" value="NM_026094.3"/>
</dbReference>
<dbReference type="SMR" id="Q6UQ17"/>
<dbReference type="FunCoup" id="Q6UQ17">
    <property type="interactions" value="13"/>
</dbReference>
<dbReference type="STRING" id="10090.ENSMUSP00000020383"/>
<dbReference type="SwissLipids" id="SLP:000000353"/>
<dbReference type="iPTMnet" id="Q6UQ17"/>
<dbReference type="PhosphoSitePlus" id="Q6UQ17"/>
<dbReference type="SwissPalm" id="Q6UQ17"/>
<dbReference type="PaxDb" id="10090-ENSMUSP00000020383"/>
<dbReference type="ProteomicsDB" id="277087"/>
<dbReference type="Antibodypedia" id="67630">
    <property type="antibodies" value="55 antibodies from 12 providers"/>
</dbReference>
<dbReference type="DNASU" id="67331"/>
<dbReference type="Ensembl" id="ENSMUST00000020383.6">
    <property type="protein sequence ID" value="ENSMUSP00000020383.5"/>
    <property type="gene ID" value="ENSMUSG00000003341.10"/>
</dbReference>
<dbReference type="GeneID" id="67331"/>
<dbReference type="KEGG" id="mmu:67331"/>
<dbReference type="UCSC" id="uc007gdo.1">
    <property type="organism name" value="mouse"/>
</dbReference>
<dbReference type="AGR" id="MGI:1914581"/>
<dbReference type="CTD" id="148229"/>
<dbReference type="MGI" id="MGI:1914581">
    <property type="gene designation" value="Atp8b3"/>
</dbReference>
<dbReference type="VEuPathDB" id="HostDB:ENSMUSG00000003341"/>
<dbReference type="eggNOG" id="KOG0206">
    <property type="taxonomic scope" value="Eukaryota"/>
</dbReference>
<dbReference type="GeneTree" id="ENSGT00940000160463"/>
<dbReference type="HOGENOM" id="CLU_000846_3_2_1"/>
<dbReference type="InParanoid" id="Q6UQ17"/>
<dbReference type="OMA" id="DILMFFR"/>
<dbReference type="OrthoDB" id="377733at2759"/>
<dbReference type="PhylomeDB" id="Q6UQ17"/>
<dbReference type="TreeFam" id="TF300654"/>
<dbReference type="BRENDA" id="7.6.2.1">
    <property type="organism ID" value="3474"/>
</dbReference>
<dbReference type="Reactome" id="R-MMU-936837">
    <property type="pathway name" value="Ion transport by P-type ATPases"/>
</dbReference>
<dbReference type="BioGRID-ORCS" id="67331">
    <property type="hits" value="5 hits in 80 CRISPR screens"/>
</dbReference>
<dbReference type="ChiTaRS" id="Atp8b3">
    <property type="organism name" value="mouse"/>
</dbReference>
<dbReference type="PRO" id="PR:Q6UQ17"/>
<dbReference type="Proteomes" id="UP000000589">
    <property type="component" value="Chromosome 10"/>
</dbReference>
<dbReference type="RNAct" id="Q6UQ17">
    <property type="molecule type" value="protein"/>
</dbReference>
<dbReference type="Bgee" id="ENSMUSG00000003341">
    <property type="expression patterns" value="Expressed in spermatid and 21 other cell types or tissues"/>
</dbReference>
<dbReference type="ExpressionAtlas" id="Q6UQ17">
    <property type="expression patterns" value="baseline and differential"/>
</dbReference>
<dbReference type="GO" id="GO:0002080">
    <property type="term" value="C:acrosomal membrane"/>
    <property type="evidence" value="ECO:0007669"/>
    <property type="project" value="UniProtKB-SubCell"/>
</dbReference>
<dbReference type="GO" id="GO:0001669">
    <property type="term" value="C:acrosomal vesicle"/>
    <property type="evidence" value="ECO:0000314"/>
    <property type="project" value="MGI"/>
</dbReference>
<dbReference type="GO" id="GO:0005789">
    <property type="term" value="C:endoplasmic reticulum membrane"/>
    <property type="evidence" value="ECO:0007669"/>
    <property type="project" value="UniProtKB-SubCell"/>
</dbReference>
<dbReference type="GO" id="GO:0016020">
    <property type="term" value="C:membrane"/>
    <property type="evidence" value="ECO:0000314"/>
    <property type="project" value="MGI"/>
</dbReference>
<dbReference type="GO" id="GO:0005524">
    <property type="term" value="F:ATP binding"/>
    <property type="evidence" value="ECO:0007669"/>
    <property type="project" value="UniProtKB-KW"/>
</dbReference>
<dbReference type="GO" id="GO:0016887">
    <property type="term" value="F:ATP hydrolysis activity"/>
    <property type="evidence" value="ECO:0007669"/>
    <property type="project" value="InterPro"/>
</dbReference>
<dbReference type="GO" id="GO:0000287">
    <property type="term" value="F:magnesium ion binding"/>
    <property type="evidence" value="ECO:0007669"/>
    <property type="project" value="InterPro"/>
</dbReference>
<dbReference type="GO" id="GO:0090556">
    <property type="term" value="F:phosphatidylserine floppase activity"/>
    <property type="evidence" value="ECO:0007669"/>
    <property type="project" value="RHEA"/>
</dbReference>
<dbReference type="GO" id="GO:0007339">
    <property type="term" value="P:binding of sperm to zona pellucida"/>
    <property type="evidence" value="ECO:0000315"/>
    <property type="project" value="MGI"/>
</dbReference>
<dbReference type="GO" id="GO:0051649">
    <property type="term" value="P:establishment of localization in cell"/>
    <property type="evidence" value="ECO:0000315"/>
    <property type="project" value="MGI"/>
</dbReference>
<dbReference type="GO" id="GO:0045332">
    <property type="term" value="P:phospholipid translocation"/>
    <property type="evidence" value="ECO:0000315"/>
    <property type="project" value="MGI"/>
</dbReference>
<dbReference type="CDD" id="cd02073">
    <property type="entry name" value="P-type_ATPase_APLT_Dnf-like"/>
    <property type="match status" value="1"/>
</dbReference>
<dbReference type="FunFam" id="3.40.1110.10:FF:000096">
    <property type="entry name" value="Phospholipid-transporting ATPase"/>
    <property type="match status" value="1"/>
</dbReference>
<dbReference type="FunFam" id="3.40.50.1000:FF:000001">
    <property type="entry name" value="Phospholipid-transporting ATPase IC"/>
    <property type="match status" value="1"/>
</dbReference>
<dbReference type="Gene3D" id="3.40.1110.10">
    <property type="entry name" value="Calcium-transporting ATPase, cytoplasmic domain N"/>
    <property type="match status" value="1"/>
</dbReference>
<dbReference type="Gene3D" id="2.70.150.10">
    <property type="entry name" value="Calcium-transporting ATPase, cytoplasmic transduction domain A"/>
    <property type="match status" value="1"/>
</dbReference>
<dbReference type="Gene3D" id="3.40.50.1000">
    <property type="entry name" value="HAD superfamily/HAD-like"/>
    <property type="match status" value="1"/>
</dbReference>
<dbReference type="InterPro" id="IPR023299">
    <property type="entry name" value="ATPase_P-typ_cyto_dom_N"/>
</dbReference>
<dbReference type="InterPro" id="IPR018303">
    <property type="entry name" value="ATPase_P-typ_P_site"/>
</dbReference>
<dbReference type="InterPro" id="IPR023298">
    <property type="entry name" value="ATPase_P-typ_TM_dom_sf"/>
</dbReference>
<dbReference type="InterPro" id="IPR008250">
    <property type="entry name" value="ATPase_P-typ_transduc_dom_A_sf"/>
</dbReference>
<dbReference type="InterPro" id="IPR036412">
    <property type="entry name" value="HAD-like_sf"/>
</dbReference>
<dbReference type="InterPro" id="IPR023214">
    <property type="entry name" value="HAD_sf"/>
</dbReference>
<dbReference type="InterPro" id="IPR006539">
    <property type="entry name" value="P-type_ATPase_IV"/>
</dbReference>
<dbReference type="InterPro" id="IPR032631">
    <property type="entry name" value="P-type_ATPase_N"/>
</dbReference>
<dbReference type="InterPro" id="IPR001757">
    <property type="entry name" value="P_typ_ATPase"/>
</dbReference>
<dbReference type="InterPro" id="IPR032630">
    <property type="entry name" value="P_typ_ATPase_c"/>
</dbReference>
<dbReference type="InterPro" id="IPR044492">
    <property type="entry name" value="P_typ_ATPase_HD_dom"/>
</dbReference>
<dbReference type="NCBIfam" id="TIGR01652">
    <property type="entry name" value="ATPase-Plipid"/>
    <property type="match status" value="1"/>
</dbReference>
<dbReference type="NCBIfam" id="TIGR01494">
    <property type="entry name" value="ATPase_P-type"/>
    <property type="match status" value="1"/>
</dbReference>
<dbReference type="PANTHER" id="PTHR24092:SF78">
    <property type="entry name" value="PHOSPHOLIPID-TRANSPORTING ATPASE IK"/>
    <property type="match status" value="1"/>
</dbReference>
<dbReference type="PANTHER" id="PTHR24092">
    <property type="entry name" value="PROBABLE PHOSPHOLIPID-TRANSPORTING ATPASE"/>
    <property type="match status" value="1"/>
</dbReference>
<dbReference type="Pfam" id="PF13246">
    <property type="entry name" value="Cation_ATPase"/>
    <property type="match status" value="1"/>
</dbReference>
<dbReference type="Pfam" id="PF16212">
    <property type="entry name" value="PhoLip_ATPase_C"/>
    <property type="match status" value="1"/>
</dbReference>
<dbReference type="Pfam" id="PF16209">
    <property type="entry name" value="PhoLip_ATPase_N"/>
    <property type="match status" value="1"/>
</dbReference>
<dbReference type="PRINTS" id="PR00119">
    <property type="entry name" value="CATATPASE"/>
</dbReference>
<dbReference type="SFLD" id="SFLDG00002">
    <property type="entry name" value="C1.7:_P-type_atpase_like"/>
    <property type="match status" value="1"/>
</dbReference>
<dbReference type="SFLD" id="SFLDF00027">
    <property type="entry name" value="p-type_atpase"/>
    <property type="match status" value="1"/>
</dbReference>
<dbReference type="SUPFAM" id="SSF81653">
    <property type="entry name" value="Calcium ATPase, transduction domain A"/>
    <property type="match status" value="1"/>
</dbReference>
<dbReference type="SUPFAM" id="SSF81665">
    <property type="entry name" value="Calcium ATPase, transmembrane domain M"/>
    <property type="match status" value="1"/>
</dbReference>
<dbReference type="SUPFAM" id="SSF56784">
    <property type="entry name" value="HAD-like"/>
    <property type="match status" value="1"/>
</dbReference>
<dbReference type="SUPFAM" id="SSF81660">
    <property type="entry name" value="Metal cation-transporting ATPase, ATP-binding domain N"/>
    <property type="match status" value="1"/>
</dbReference>
<dbReference type="PROSITE" id="PS00154">
    <property type="entry name" value="ATPASE_E1_E2"/>
    <property type="match status" value="1"/>
</dbReference>
<sequence length="1335" mass="151955">MDGVHLGENLEDKDTEFTWEVKANDRTYHKQFKKKGFLCWRQKKYKSNAIHTAKYNIFSFLPLNLYEQFHRMSNLYFLFIIILQGIPEISTLPWFTLFAPLVCLFVIRATRDLVDDIGRHRSDKIINNRPCQILRGKSFLWKKWKNLCVGDVVCLSKDSIVPADLLLLASTEPSSLCYVETADIDGETNLKFRQALTVTHHELTSPKKMASFQGTVTCEEPNSRMHHFVGSLEWNSRKYPLDIGNLLLRGCKIRNTDTCYGLVIYAGLDTKIMKNCGKIHLKRTKLDLMMNKLVALIFLSLVIASLLLTVGFTFMVKQFKAKHYYMSPTHGRSDAMESFFIFWGFLILLSVMVPMAMFIIAEFIYLGNSIFINWDLNMYYEPLDMPAKARSTSLNDQLGQVQYIFSDKTGTLTQNIMTFKKCCINGCIYDSDDEHGTLRKRNPYAWNPFADGKLQFYNKELESLVQGRQDRAVQEFWRLLAICHTVMVQEKDNQLLYQAASPDEEALVTAARNFGYVFLSRTQDTITLVELGEERVYQVLAMMDFNSVRKRMSVLVRNPEGSICLYTKGADTVILERLRSKGVMEATTEEVLAAFAEQTLRTLCLAYKDVEEDAYKEWEPEHQEAALLLQNRAQALHQVYNKMEQNLQLLGATAIEDKLQDGVPETIKCLKKGNIKIWVLTGDKPETAVNIGFACQLLSENMIILEDKDINQVLERYWEDNVHQKAFKMMTHHNMALVINGEFLDQLLLSLRKEPRALVQNAVVDEVAQEPVVSALDFLQKRRISQMWRNAGPSLGTSHSADSKIRESPEVQRERAFVDLASKCQAVICCRVTPKQKALVVALVKKYQQVVTLAIGDGANDVNMIKTADIGVGLAGQEGMQAVQNSDYVLAQFCYLQRLLLVHGRWSYMRVCKFLRYFFYKTVASMMAQIWFSLVNGFSAQPLYEGWFLALFNLLYSTLPVLYIGLFEQDVTAEKSLKMPELYMAGQKGELFNYSIFMQAITHGTITSMINFFVTVMVSSDMSKAGSSHDYQSLGVLVAISSLLSVTLEVMLVVKYWTLLFVGAVVLSLSSYVLMTSLTQSLWMYRISPKTFPFLFADYNVLFEPCSLLLIVLNVALNVLPMLALRTIHRTVLKQRPKGEEEAPSEEVAVEPAMRHLRRGIPARRSSYAFSHREGYANLITQGTILRRQTHVDDSDGGTVCESLNPPEEDIPLQNKDSVFNPRKISILAKKRRHFFGKGSQEEVHPNTSSQTMEKQPTIHRDSETQKLPTTTSATSGKLLPSASEDEAFYSVASQYTLASQPKHTDVHSSFWKSPLWRDSASSSPSQLEVPRKQS</sequence>
<comment type="function">
    <text evidence="7 8">P4-ATPase flippase which catalyzes the hydrolysis of ATP coupled to the transport of aminophospholipids from the outer to the inner leaflet of various membranes and ensures the maintenance of asymmetric distribution of phospholipids (PubMed:14975727, PubMed:19017724). Phospholipid translocation also seems to be implicated in vesicle formation and in uptake of lipid signaling molecules (PubMed:14975727). May be responsible for the maintenance of asymmetric distribution of phosphatidylserine (PS) in spermatozoa membranes (PubMed:14975727). Involved in acrosome reactions and binding of spermatozoa to zona pellucida (PubMed:19017724).</text>
</comment>
<comment type="catalytic activity">
    <reaction evidence="7">
        <text>ATP + H2O + phospholipidSide 1 = ADP + phosphate + phospholipidSide 2.</text>
        <dbReference type="EC" id="7.6.2.1"/>
    </reaction>
</comment>
<comment type="catalytic activity">
    <reaction evidence="7">
        <text>a 1,2-diacyl-sn-glycero-3-phospho-L-serine(out) + ATP + H2O = a 1,2-diacyl-sn-glycero-3-phospho-L-serine(in) + ADP + phosphate + H(+)</text>
        <dbReference type="Rhea" id="RHEA:38567"/>
        <dbReference type="ChEBI" id="CHEBI:15377"/>
        <dbReference type="ChEBI" id="CHEBI:15378"/>
        <dbReference type="ChEBI" id="CHEBI:30616"/>
        <dbReference type="ChEBI" id="CHEBI:43474"/>
        <dbReference type="ChEBI" id="CHEBI:57262"/>
        <dbReference type="ChEBI" id="CHEBI:456216"/>
    </reaction>
    <physiologicalReaction direction="left-to-right" evidence="10">
        <dbReference type="Rhea" id="RHEA:38568"/>
    </physiologicalReaction>
</comment>
<comment type="cofactor">
    <cofactor evidence="4">
        <name>Mg(2+)</name>
        <dbReference type="ChEBI" id="CHEBI:18420"/>
    </cofactor>
</comment>
<comment type="subcellular location">
    <subcellularLocation>
        <location evidence="7 8">Cytoplasmic vesicle</location>
        <location evidence="7 8">Secretory vesicle</location>
        <location evidence="7 8">Acrosome membrane</location>
        <topology evidence="5">Multi-pass membrane protein</topology>
    </subcellularLocation>
    <subcellularLocation>
        <location evidence="1">Endoplasmic reticulum membrane</location>
        <topology evidence="5">Multi-pass membrane protein</topology>
    </subcellularLocation>
</comment>
<comment type="tissue specificity">
    <text evidence="7 8">Expressed in testis, specifically in spermatids within seminiferous tubules (at protein level).</text>
</comment>
<comment type="developmental stage">
    <text evidence="8">Developmentally regulated in testis. Expression is first detected at 17 days after birth and is later up-regulated up to adulthood amd maintained thereafter.</text>
</comment>
<comment type="disruption phenotype">
    <text evidence="7">Disrupted normal fertilization by sperm; sensitivity to sperm concentration and the time required to fertilize an egg is increased; the number of spermatozoa bound to zona pellucida is decreased.</text>
</comment>
<comment type="similarity">
    <text evidence="9">Belongs to the cation transport ATPase (P-type) (TC 3.A.3) family. Type IV subfamily.</text>
</comment>
<protein>
    <recommendedName>
        <fullName evidence="9">Phospholipid-transporting ATPase IK</fullName>
        <ecNumber evidence="7">7.6.2.1</ecNumber>
    </recommendedName>
    <alternativeName>
        <fullName>ATPase, class I, type 8B, member 3</fullName>
    </alternativeName>
    <alternativeName>
        <fullName>Sperm aminophospholipid transporter</fullName>
        <shortName>SAPLT</shortName>
    </alternativeName>
</protein>
<organism>
    <name type="scientific">Mus musculus</name>
    <name type="common">Mouse</name>
    <dbReference type="NCBI Taxonomy" id="10090"/>
    <lineage>
        <taxon>Eukaryota</taxon>
        <taxon>Metazoa</taxon>
        <taxon>Chordata</taxon>
        <taxon>Craniata</taxon>
        <taxon>Vertebrata</taxon>
        <taxon>Euteleostomi</taxon>
        <taxon>Mammalia</taxon>
        <taxon>Eutheria</taxon>
        <taxon>Euarchontoglires</taxon>
        <taxon>Glires</taxon>
        <taxon>Rodentia</taxon>
        <taxon>Myomorpha</taxon>
        <taxon>Muroidea</taxon>
        <taxon>Muridae</taxon>
        <taxon>Murinae</taxon>
        <taxon>Mus</taxon>
        <taxon>Mus</taxon>
    </lineage>
</organism>
<reference key="1">
    <citation type="journal article" date="2004" name="Dev. Biol.">
        <title>A novel aminophospholipid transporter exclusively expressed in spermatozoa is required for membrane lipid asymmetry and normal fertilization.</title>
        <authorList>
            <person name="Wang L."/>
            <person name="Beserra C."/>
            <person name="Garbers D.L."/>
        </authorList>
    </citation>
    <scope>NUCLEOTIDE SEQUENCE [MRNA]</scope>
    <scope>FUNCTION</scope>
    <scope>TISSUE SPECIFICITY</scope>
    <scope>SUBCELLULAR LOCATION</scope>
    <scope>DISRUPTION PHENOTYPE</scope>
    <scope>CATALYTIC ACTIVITY</scope>
    <source>
        <strain>ICR</strain>
        <tissue>Testis</tissue>
    </source>
</reference>
<reference key="2">
    <citation type="journal article" date="2009" name="PLoS Biol.">
        <title>Lineage-specific biology revealed by a finished genome assembly of the mouse.</title>
        <authorList>
            <person name="Church D.M."/>
            <person name="Goodstadt L."/>
            <person name="Hillier L.W."/>
            <person name="Zody M.C."/>
            <person name="Goldstein S."/>
            <person name="She X."/>
            <person name="Bult C.J."/>
            <person name="Agarwala R."/>
            <person name="Cherry J.L."/>
            <person name="DiCuccio M."/>
            <person name="Hlavina W."/>
            <person name="Kapustin Y."/>
            <person name="Meric P."/>
            <person name="Maglott D."/>
            <person name="Birtle Z."/>
            <person name="Marques A.C."/>
            <person name="Graves T."/>
            <person name="Zhou S."/>
            <person name="Teague B."/>
            <person name="Potamousis K."/>
            <person name="Churas C."/>
            <person name="Place M."/>
            <person name="Herschleb J."/>
            <person name="Runnheim R."/>
            <person name="Forrest D."/>
            <person name="Amos-Landgraf J."/>
            <person name="Schwartz D.C."/>
            <person name="Cheng Z."/>
            <person name="Lindblad-Toh K."/>
            <person name="Eichler E.E."/>
            <person name="Ponting C.P."/>
        </authorList>
    </citation>
    <scope>NUCLEOTIDE SEQUENCE [LARGE SCALE GENOMIC DNA]</scope>
    <source>
        <strain>C57BL/6J</strain>
    </source>
</reference>
<reference key="3">
    <citation type="journal article" date="2004" name="Genome Res.">
        <title>The status, quality, and expansion of the NIH full-length cDNA project: the Mammalian Gene Collection (MGC).</title>
        <authorList>
            <consortium name="The MGC Project Team"/>
        </authorList>
    </citation>
    <scope>NUCLEOTIDE SEQUENCE [LARGE SCALE MRNA]</scope>
</reference>
<reference key="4">
    <citation type="journal article" date="2009" name="Reproduction">
        <title>Expression of Atp8b3 in murine testis and its characterization as a testis specific P-type ATPase.</title>
        <authorList>
            <person name="Gong E.Y."/>
            <person name="Park E."/>
            <person name="Lee H.J."/>
            <person name="Lee K."/>
        </authorList>
    </citation>
    <scope>TISSUE SPECIFICITY</scope>
    <scope>SUBCELLULAR LOCATION</scope>
    <scope>DEVELOPMENTAL STAGE</scope>
    <scope>FUNCTION</scope>
</reference>
<gene>
    <name evidence="11" type="primary">Atp8b3</name>
</gene>
<evidence type="ECO:0000250" key="1">
    <source>
        <dbReference type="UniProtKB" id="O60423"/>
    </source>
</evidence>
<evidence type="ECO:0000250" key="2">
    <source>
        <dbReference type="UniProtKB" id="P04191"/>
    </source>
</evidence>
<evidence type="ECO:0000250" key="3">
    <source>
        <dbReference type="UniProtKB" id="Q8NB49"/>
    </source>
</evidence>
<evidence type="ECO:0000250" key="4">
    <source>
        <dbReference type="UniProtKB" id="Q9Y2Q0"/>
    </source>
</evidence>
<evidence type="ECO:0000255" key="5"/>
<evidence type="ECO:0000256" key="6">
    <source>
        <dbReference type="SAM" id="MobiDB-lite"/>
    </source>
</evidence>
<evidence type="ECO:0000269" key="7">
    <source>
    </source>
</evidence>
<evidence type="ECO:0000269" key="8">
    <source>
    </source>
</evidence>
<evidence type="ECO:0000305" key="9"/>
<evidence type="ECO:0000305" key="10">
    <source>
    </source>
</evidence>
<evidence type="ECO:0000312" key="11">
    <source>
        <dbReference type="MGI" id="MGI:1914581"/>
    </source>
</evidence>
<feature type="chain" id="PRO_0000429839" description="Phospholipid-transporting ATPase IK">
    <location>
        <begin position="1"/>
        <end position="1335"/>
    </location>
</feature>
<feature type="topological domain" description="Cytoplasmic" evidence="5">
    <location>
        <begin position="1"/>
        <end position="74"/>
    </location>
</feature>
<feature type="transmembrane region" description="Helical" evidence="5">
    <location>
        <begin position="75"/>
        <end position="95"/>
    </location>
</feature>
<feature type="topological domain" description="Exoplasmic loop" evidence="5">
    <location>
        <begin position="96"/>
        <end position="295"/>
    </location>
</feature>
<feature type="transmembrane region" description="Helical" evidence="5">
    <location>
        <begin position="296"/>
        <end position="316"/>
    </location>
</feature>
<feature type="topological domain" description="Cytoplasmic" evidence="5">
    <location>
        <begin position="317"/>
        <end position="339"/>
    </location>
</feature>
<feature type="transmembrane region" description="Helical" evidence="5">
    <location>
        <begin position="340"/>
        <end position="360"/>
    </location>
</feature>
<feature type="topological domain" description="Exoplasmic loop" evidence="5">
    <location>
        <begin position="361"/>
        <end position="917"/>
    </location>
</feature>
<feature type="transmembrane region" description="Helical" evidence="5">
    <location>
        <begin position="918"/>
        <end position="938"/>
    </location>
</feature>
<feature type="topological domain" description="Cytoplasmic" evidence="5">
    <location>
        <begin position="939"/>
        <end position="946"/>
    </location>
</feature>
<feature type="transmembrane region" description="Helical" evidence="5">
    <location>
        <begin position="947"/>
        <end position="967"/>
    </location>
</feature>
<feature type="topological domain" description="Exoplasmic loop" evidence="5">
    <location>
        <begin position="968"/>
        <end position="995"/>
    </location>
</feature>
<feature type="transmembrane region" description="Helical" evidence="5">
    <location>
        <begin position="996"/>
        <end position="1016"/>
    </location>
</feature>
<feature type="topological domain" description="Cytoplasmic" evidence="5">
    <location>
        <begin position="1017"/>
        <end position="1033"/>
    </location>
</feature>
<feature type="transmembrane region" description="Helical" evidence="5">
    <location>
        <begin position="1034"/>
        <end position="1054"/>
    </location>
</feature>
<feature type="topological domain" description="Exoplasmic loop" evidence="5">
    <location>
        <position position="1055"/>
    </location>
</feature>
<feature type="transmembrane region" description="Helical" evidence="5">
    <location>
        <begin position="1056"/>
        <end position="1076"/>
    </location>
</feature>
<feature type="topological domain" description="Cytoplasmic" evidence="5">
    <location>
        <begin position="1077"/>
        <end position="1104"/>
    </location>
</feature>
<feature type="transmembrane region" description="Helical" evidence="5">
    <location>
        <begin position="1105"/>
        <end position="1125"/>
    </location>
</feature>
<feature type="topological domain" description="Exoplasmic loop" evidence="5">
    <location>
        <begin position="1126"/>
        <end position="1335"/>
    </location>
</feature>
<feature type="region of interest" description="Disordered" evidence="6">
    <location>
        <begin position="1192"/>
        <end position="1215"/>
    </location>
</feature>
<feature type="region of interest" description="Disordered" evidence="6">
    <location>
        <begin position="1236"/>
        <end position="1280"/>
    </location>
</feature>
<feature type="region of interest" description="Disordered" evidence="6">
    <location>
        <begin position="1314"/>
        <end position="1335"/>
    </location>
</feature>
<feature type="compositionally biased region" description="Polar residues" evidence="6">
    <location>
        <begin position="1246"/>
        <end position="1255"/>
    </location>
</feature>
<feature type="compositionally biased region" description="Polar residues" evidence="6">
    <location>
        <begin position="1266"/>
        <end position="1276"/>
    </location>
</feature>
<feature type="active site" description="4-aspartylphosphate intermediate" evidence="4">
    <location>
        <position position="407"/>
    </location>
</feature>
<feature type="binding site" evidence="4">
    <location>
        <position position="407"/>
    </location>
    <ligand>
        <name>ATP</name>
        <dbReference type="ChEBI" id="CHEBI:30616"/>
    </ligand>
</feature>
<feature type="binding site" evidence="4">
    <location>
        <position position="407"/>
    </location>
    <ligand>
        <name>Mg(2+)</name>
        <dbReference type="ChEBI" id="CHEBI:18420"/>
    </ligand>
</feature>
<feature type="binding site" evidence="4">
    <location>
        <position position="408"/>
    </location>
    <ligand>
        <name>ATP</name>
        <dbReference type="ChEBI" id="CHEBI:30616"/>
    </ligand>
</feature>
<feature type="binding site" evidence="4">
    <location>
        <position position="409"/>
    </location>
    <ligand>
        <name>ATP</name>
        <dbReference type="ChEBI" id="CHEBI:30616"/>
    </ligand>
</feature>
<feature type="binding site" evidence="4">
    <location>
        <position position="409"/>
    </location>
    <ligand>
        <name>Mg(2+)</name>
        <dbReference type="ChEBI" id="CHEBI:18420"/>
    </ligand>
</feature>
<feature type="binding site" evidence="2">
    <location>
        <position position="504"/>
    </location>
    <ligand>
        <name>ATP</name>
        <dbReference type="ChEBI" id="CHEBI:30616"/>
    </ligand>
</feature>
<feature type="binding site" evidence="4">
    <location>
        <position position="545"/>
    </location>
    <ligand>
        <name>ATP</name>
        <dbReference type="ChEBI" id="CHEBI:30616"/>
    </ligand>
</feature>
<feature type="binding site" evidence="2">
    <location>
        <position position="568"/>
    </location>
    <ligand>
        <name>ATP</name>
        <dbReference type="ChEBI" id="CHEBI:30616"/>
    </ligand>
</feature>
<feature type="binding site" evidence="2">
    <location>
        <position position="601"/>
    </location>
    <ligand>
        <name>ATP</name>
        <dbReference type="ChEBI" id="CHEBI:30616"/>
    </ligand>
</feature>
<feature type="binding site" evidence="2">
    <location>
        <position position="681"/>
    </location>
    <ligand>
        <name>ATP</name>
        <dbReference type="ChEBI" id="CHEBI:30616"/>
    </ligand>
</feature>
<feature type="binding site" evidence="2">
    <location>
        <position position="682"/>
    </location>
    <ligand>
        <name>ATP</name>
        <dbReference type="ChEBI" id="CHEBI:30616"/>
    </ligand>
</feature>
<feature type="binding site" evidence="2">
    <location>
        <position position="683"/>
    </location>
    <ligand>
        <name>ATP</name>
        <dbReference type="ChEBI" id="CHEBI:30616"/>
    </ligand>
</feature>
<feature type="binding site" evidence="2">
    <location>
        <position position="831"/>
    </location>
    <ligand>
        <name>ATP</name>
        <dbReference type="ChEBI" id="CHEBI:30616"/>
    </ligand>
</feature>
<feature type="binding site" evidence="2">
    <location>
        <position position="837"/>
    </location>
    <ligand>
        <name>ATP</name>
        <dbReference type="ChEBI" id="CHEBI:30616"/>
    </ligand>
</feature>
<feature type="binding site" evidence="4">
    <location>
        <position position="857"/>
    </location>
    <ligand>
        <name>Mg(2+)</name>
        <dbReference type="ChEBI" id="CHEBI:18420"/>
    </ligand>
</feature>
<feature type="binding site" evidence="4">
    <location>
        <position position="860"/>
    </location>
    <ligand>
        <name>ATP</name>
        <dbReference type="ChEBI" id="CHEBI:30616"/>
    </ligand>
</feature>
<feature type="binding site" evidence="4">
    <location>
        <position position="861"/>
    </location>
    <ligand>
        <name>ATP</name>
        <dbReference type="ChEBI" id="CHEBI:30616"/>
    </ligand>
</feature>
<feature type="binding site" evidence="3">
    <location>
        <position position="861"/>
    </location>
    <ligand>
        <name>Mg(2+)</name>
        <dbReference type="ChEBI" id="CHEBI:18420"/>
    </ligand>
</feature>
<name>AT8B3_MOUSE</name>
<proteinExistence type="evidence at protein level"/>
<keyword id="KW-0067">ATP-binding</keyword>
<keyword id="KW-0968">Cytoplasmic vesicle</keyword>
<keyword id="KW-0256">Endoplasmic reticulum</keyword>
<keyword id="KW-0445">Lipid transport</keyword>
<keyword id="KW-0460">Magnesium</keyword>
<keyword id="KW-0472">Membrane</keyword>
<keyword id="KW-0479">Metal-binding</keyword>
<keyword id="KW-0547">Nucleotide-binding</keyword>
<keyword id="KW-1185">Reference proteome</keyword>
<keyword id="KW-1278">Translocase</keyword>
<keyword id="KW-0812">Transmembrane</keyword>
<keyword id="KW-1133">Transmembrane helix</keyword>
<keyword id="KW-0813">Transport</keyword>